<proteinExistence type="inferred from homology"/>
<keyword id="KW-0997">Cell inner membrane</keyword>
<keyword id="KW-1003">Cell membrane</keyword>
<keyword id="KW-0472">Membrane</keyword>
<keyword id="KW-0812">Transmembrane</keyword>
<keyword id="KW-1133">Transmembrane helix</keyword>
<keyword id="KW-0813">Transport</keyword>
<feature type="chain" id="PRO_0000447741" description="Putative transporter MamV">
    <location>
        <begin position="1"/>
        <end position="333"/>
    </location>
</feature>
<feature type="transmembrane region" description="Helical" evidence="1">
    <location>
        <begin position="19"/>
        <end position="39"/>
    </location>
</feature>
<feature type="transmembrane region" description="Helical" evidence="1">
    <location>
        <begin position="86"/>
        <end position="106"/>
    </location>
</feature>
<feature type="transmembrane region" description="Helical" evidence="1">
    <location>
        <begin position="111"/>
        <end position="131"/>
    </location>
</feature>
<feature type="transmembrane region" description="Helical" evidence="1">
    <location>
        <begin position="170"/>
        <end position="190"/>
    </location>
</feature>
<feature type="transmembrane region" description="Helical" evidence="1">
    <location>
        <begin position="191"/>
        <end position="211"/>
    </location>
</feature>
<comment type="function">
    <text evidence="3">Expression of just the minimal mamAB gene cluster (amb0961 to amb0978), including this gene, is sufficient to form a minimal magnetosome chain with small magnetite particles.</text>
</comment>
<comment type="subcellular location">
    <subcellularLocation>
        <location evidence="5">Cell inner membrane</location>
        <topology evidence="1">Multi-pass membrane protein</topology>
    </subcellularLocation>
</comment>
<comment type="induction">
    <text evidence="6">Last member of the probable 18 gene mamAB operon.</text>
</comment>
<comment type="disruption phenotype">
    <text evidence="2">No visible phenotype, magnetic response and magnetosome formation is wild-type (PubMed:20212111). Deletion of genes mamH to mamV (amb0961 to amb0978) gives cells with no magnetosomes and no magnetic response (PubMed:20212111).</text>
</comment>
<comment type="miscellaneous">
    <text evidence="5">This bacteria makes up to 20 cubo-octahedral magnetosomes of about 45 nm in diameter which contain membrane-bound crystals of magnetite (Fe(3)O(4)).</text>
</comment>
<comment type="miscellaneous">
    <text evidence="3">Expression of just the minimal mamAB gene cluster (amb0961 to amb0978), including this gene, is sufficient to form a minimal magnetosome chain with small magnetite particles.</text>
</comment>
<comment type="miscellaneous">
    <text evidence="5">This protein has no ortholog in M.gryphiswaldense strain MSR-1.</text>
</comment>
<comment type="similarity">
    <text evidence="5">Belongs to the cation diffusion facilitator (CDF) transporter (TC 2.A.4) family.</text>
</comment>
<reference key="1">
    <citation type="journal article" date="2005" name="DNA Res.">
        <title>Complete genome sequence of the facultative anaerobic magnetotactic bacterium Magnetospirillum sp. strain AMB-1.</title>
        <authorList>
            <person name="Matsunaga T."/>
            <person name="Okamura Y."/>
            <person name="Fukuda Y."/>
            <person name="Wahyudi A.T."/>
            <person name="Murase Y."/>
            <person name="Takeyama H."/>
        </authorList>
    </citation>
    <scope>NUCLEOTIDE SEQUENCE [LARGE SCALE GENOMIC DNA]</scope>
    <source>
        <strain>ATCC 700264 / AMB-1</strain>
    </source>
</reference>
<reference key="2">
    <citation type="journal article" date="2010" name="Proc. Natl. Acad. Sci. U.S.A.">
        <title>Comprehensive genetic dissection of the magnetosome gene island reveals the step-wise assembly of a prokaryotic organelle.</title>
        <authorList>
            <person name="Murat D."/>
            <person name="Quinlan A."/>
            <person name="Vali H."/>
            <person name="Komeili A."/>
        </authorList>
    </citation>
    <scope>DISRUPTION PHENOTYPE</scope>
    <source>
        <strain>ATCC 700264 / AMB-1</strain>
    </source>
</reference>
<reference key="3">
    <citation type="journal article" date="2012" name="Mol. Microbiol.">
        <title>The magnetosome membrane protein, MmsF, is a major regulator of magnetite biomineralization in Magnetospirillum magneticum AMB-1.</title>
        <authorList>
            <person name="Murat D."/>
            <person name="Falahati V."/>
            <person name="Bertinetti L."/>
            <person name="Csencsits R."/>
            <person name="Koernig A."/>
            <person name="Downing K."/>
            <person name="Faivre D."/>
            <person name="Komeili A."/>
        </authorList>
    </citation>
    <scope>MINIMAL MAGNETOSOME ISLAND</scope>
    <source>
        <strain>ATCC 700264 / AMB-1</strain>
    </source>
</reference>
<accession>Q2W8P3</accession>
<dbReference type="EMBL" id="AP007255">
    <property type="protein sequence ID" value="BAE49782.1"/>
    <property type="molecule type" value="Genomic_DNA"/>
</dbReference>
<dbReference type="SMR" id="Q2W8P3"/>
<dbReference type="STRING" id="342108.amb0978"/>
<dbReference type="KEGG" id="mag:amb0978"/>
<dbReference type="HOGENOM" id="CLU_013430_3_3_5"/>
<dbReference type="Proteomes" id="UP000007058">
    <property type="component" value="Chromosome"/>
</dbReference>
<dbReference type="GO" id="GO:0005886">
    <property type="term" value="C:plasma membrane"/>
    <property type="evidence" value="ECO:0007669"/>
    <property type="project" value="UniProtKB-SubCell"/>
</dbReference>
<dbReference type="GO" id="GO:0008324">
    <property type="term" value="F:monoatomic cation transmembrane transporter activity"/>
    <property type="evidence" value="ECO:0007669"/>
    <property type="project" value="InterPro"/>
</dbReference>
<dbReference type="FunFam" id="1.20.1510.10:FF:000006">
    <property type="entry name" value="Divalent cation efflux transporter"/>
    <property type="match status" value="1"/>
</dbReference>
<dbReference type="Gene3D" id="1.20.1510.10">
    <property type="entry name" value="Cation efflux protein transmembrane domain"/>
    <property type="match status" value="1"/>
</dbReference>
<dbReference type="Gene3D" id="3.30.70.1350">
    <property type="entry name" value="Cation efflux protein, cytoplasmic domain"/>
    <property type="match status" value="1"/>
</dbReference>
<dbReference type="InterPro" id="IPR002524">
    <property type="entry name" value="Cation_efflux"/>
</dbReference>
<dbReference type="InterPro" id="IPR027470">
    <property type="entry name" value="Cation_efflux_CTD"/>
</dbReference>
<dbReference type="InterPro" id="IPR036837">
    <property type="entry name" value="Cation_efflux_CTD_sf"/>
</dbReference>
<dbReference type="InterPro" id="IPR027469">
    <property type="entry name" value="Cation_efflux_TMD_sf"/>
</dbReference>
<dbReference type="InterPro" id="IPR050291">
    <property type="entry name" value="CDF_Transporter"/>
</dbReference>
<dbReference type="InterPro" id="IPR053436">
    <property type="entry name" value="Magnetosome_CDF_Transporter"/>
</dbReference>
<dbReference type="NCBIfam" id="TIGR01297">
    <property type="entry name" value="CDF"/>
    <property type="match status" value="1"/>
</dbReference>
<dbReference type="NCBIfam" id="NF033616">
    <property type="entry name" value="CDF_MamB"/>
    <property type="match status" value="1"/>
</dbReference>
<dbReference type="NCBIfam" id="NF040994">
    <property type="entry name" value="MamV"/>
    <property type="match status" value="1"/>
</dbReference>
<dbReference type="PANTHER" id="PTHR43840">
    <property type="entry name" value="MITOCHONDRIAL METAL TRANSPORTER 1-RELATED"/>
    <property type="match status" value="1"/>
</dbReference>
<dbReference type="PANTHER" id="PTHR43840:SF15">
    <property type="entry name" value="MITOCHONDRIAL METAL TRANSPORTER 1-RELATED"/>
    <property type="match status" value="1"/>
</dbReference>
<dbReference type="Pfam" id="PF01545">
    <property type="entry name" value="Cation_efflux"/>
    <property type="match status" value="1"/>
</dbReference>
<dbReference type="Pfam" id="PF16916">
    <property type="entry name" value="ZT_dimer"/>
    <property type="match status" value="1"/>
</dbReference>
<dbReference type="SUPFAM" id="SSF160240">
    <property type="entry name" value="Cation efflux protein cytoplasmic domain-like"/>
    <property type="match status" value="1"/>
</dbReference>
<dbReference type="SUPFAM" id="SSF161111">
    <property type="entry name" value="Cation efflux protein transmembrane domain-like"/>
    <property type="match status" value="1"/>
</dbReference>
<gene>
    <name evidence="4" type="primary">mamV</name>
    <name type="ordered locus">amb0978</name>
</gene>
<name>MAMV_PARM1</name>
<evidence type="ECO:0000255" key="1"/>
<evidence type="ECO:0000269" key="2">
    <source>
    </source>
</evidence>
<evidence type="ECO:0000269" key="3">
    <source>
    </source>
</evidence>
<evidence type="ECO:0000303" key="4">
    <source>
    </source>
</evidence>
<evidence type="ECO:0000305" key="5"/>
<evidence type="ECO:0000305" key="6">
    <source>
    </source>
</evidence>
<sequence length="333" mass="35606">MLGRPMKPSKCQECRDRAAWLDMFTALALAVFKTALGVLSGSMALQAHSLHSFGDFLTKGINLASVKLSSRPANSAFPYGYGKVQFLSANFIGISLMAGAAAMLWYNVTHLGSGHVQVPEVWAVFGALISAGTAELMHRYLRCVAEHTNSPAIMAAAADNRGDAYSSLAVLAGIVLSILGWVAADHLAAILVSLLVLRIGAVIAWDSIHGLMDGSVPSHRIDGIRQLLAAHHPGVSVVDLRGRRMGETWEVDLQLSISSQVTVEECHALTRELESRIAREEPHACHIRIRFIPQSGDATKTAVIETAAAVDEFAYLVEASAALRPLGHSRNGG</sequence>
<organism>
    <name type="scientific">Paramagnetospirillum magneticum (strain ATCC 700264 / AMB-1)</name>
    <name type="common">Magnetospirillum magneticum</name>
    <dbReference type="NCBI Taxonomy" id="342108"/>
    <lineage>
        <taxon>Bacteria</taxon>
        <taxon>Pseudomonadati</taxon>
        <taxon>Pseudomonadota</taxon>
        <taxon>Alphaproteobacteria</taxon>
        <taxon>Rhodospirillales</taxon>
        <taxon>Magnetospirillaceae</taxon>
        <taxon>Paramagnetospirillum</taxon>
    </lineage>
</organism>
<protein>
    <recommendedName>
        <fullName evidence="5">Putative transporter MamV</fullName>
    </recommendedName>
</protein>